<dbReference type="EC" id="2.7.7.7" evidence="1"/>
<dbReference type="EMBL" id="AE017223">
    <property type="protein sequence ID" value="AAX73487.1"/>
    <property type="molecule type" value="Genomic_DNA"/>
</dbReference>
<dbReference type="RefSeq" id="WP_002967074.1">
    <property type="nucleotide sequence ID" value="NC_006932.1"/>
</dbReference>
<dbReference type="SMR" id="Q57FU7"/>
<dbReference type="EnsemblBacteria" id="AAX73487">
    <property type="protein sequence ID" value="AAX73487"/>
    <property type="gene ID" value="BruAb1_0069"/>
</dbReference>
<dbReference type="KEGG" id="bmb:BruAb1_0069"/>
<dbReference type="HOGENOM" id="CLU_001600_4_0_5"/>
<dbReference type="Proteomes" id="UP000000540">
    <property type="component" value="Chromosome I"/>
</dbReference>
<dbReference type="GO" id="GO:0005737">
    <property type="term" value="C:cytoplasm"/>
    <property type="evidence" value="ECO:0007669"/>
    <property type="project" value="UniProtKB-SubCell"/>
</dbReference>
<dbReference type="GO" id="GO:0008408">
    <property type="term" value="F:3'-5' exonuclease activity"/>
    <property type="evidence" value="ECO:0007669"/>
    <property type="project" value="InterPro"/>
</dbReference>
<dbReference type="GO" id="GO:0003887">
    <property type="term" value="F:DNA-directed DNA polymerase activity"/>
    <property type="evidence" value="ECO:0007669"/>
    <property type="project" value="UniProtKB-UniRule"/>
</dbReference>
<dbReference type="GO" id="GO:0003676">
    <property type="term" value="F:nucleic acid binding"/>
    <property type="evidence" value="ECO:0007669"/>
    <property type="project" value="InterPro"/>
</dbReference>
<dbReference type="GO" id="GO:0006281">
    <property type="term" value="P:DNA repair"/>
    <property type="evidence" value="ECO:0007669"/>
    <property type="project" value="UniProtKB-UniRule"/>
</dbReference>
<dbReference type="GO" id="GO:0006260">
    <property type="term" value="P:DNA replication"/>
    <property type="evidence" value="ECO:0007669"/>
    <property type="project" value="UniProtKB-KW"/>
</dbReference>
<dbReference type="CDD" id="cd04485">
    <property type="entry name" value="DnaE_OBF"/>
    <property type="match status" value="1"/>
</dbReference>
<dbReference type="CDD" id="cd07434">
    <property type="entry name" value="PHP_PolIIIA_DnaE2"/>
    <property type="match status" value="1"/>
</dbReference>
<dbReference type="Gene3D" id="1.10.150.870">
    <property type="match status" value="1"/>
</dbReference>
<dbReference type="Gene3D" id="3.20.20.140">
    <property type="entry name" value="Metal-dependent hydrolases"/>
    <property type="match status" value="1"/>
</dbReference>
<dbReference type="Gene3D" id="2.40.50.140">
    <property type="entry name" value="Nucleic acid-binding proteins"/>
    <property type="match status" value="1"/>
</dbReference>
<dbReference type="HAMAP" id="MF_01902">
    <property type="entry name" value="DNApol_error_prone"/>
    <property type="match status" value="1"/>
</dbReference>
<dbReference type="InterPro" id="IPR011708">
    <property type="entry name" value="DNA_pol3_alpha_NTPase_dom"/>
</dbReference>
<dbReference type="InterPro" id="IPR040982">
    <property type="entry name" value="DNA_pol3_finger"/>
</dbReference>
<dbReference type="InterPro" id="IPR023073">
    <property type="entry name" value="DnaE2"/>
</dbReference>
<dbReference type="InterPro" id="IPR004805">
    <property type="entry name" value="DnaE2/DnaE/PolC"/>
</dbReference>
<dbReference type="InterPro" id="IPR029460">
    <property type="entry name" value="DNAPol_HHH"/>
</dbReference>
<dbReference type="InterPro" id="IPR012340">
    <property type="entry name" value="NA-bd_OB-fold"/>
</dbReference>
<dbReference type="InterPro" id="IPR004365">
    <property type="entry name" value="NA-bd_OB_tRNA"/>
</dbReference>
<dbReference type="InterPro" id="IPR004013">
    <property type="entry name" value="PHP_dom"/>
</dbReference>
<dbReference type="InterPro" id="IPR003141">
    <property type="entry name" value="Pol/His_phosphatase_N"/>
</dbReference>
<dbReference type="InterPro" id="IPR016195">
    <property type="entry name" value="Pol/histidinol_Pase-like"/>
</dbReference>
<dbReference type="NCBIfam" id="TIGR00594">
    <property type="entry name" value="polc"/>
    <property type="match status" value="1"/>
</dbReference>
<dbReference type="NCBIfam" id="NF004225">
    <property type="entry name" value="PRK05672.1"/>
    <property type="match status" value="1"/>
</dbReference>
<dbReference type="PANTHER" id="PTHR32294">
    <property type="entry name" value="DNA POLYMERASE III SUBUNIT ALPHA"/>
    <property type="match status" value="1"/>
</dbReference>
<dbReference type="PANTHER" id="PTHR32294:SF4">
    <property type="entry name" value="ERROR-PRONE DNA POLYMERASE"/>
    <property type="match status" value="1"/>
</dbReference>
<dbReference type="Pfam" id="PF07733">
    <property type="entry name" value="DNA_pol3_alpha"/>
    <property type="match status" value="1"/>
</dbReference>
<dbReference type="Pfam" id="PF17657">
    <property type="entry name" value="DNA_pol3_finger"/>
    <property type="match status" value="1"/>
</dbReference>
<dbReference type="Pfam" id="PF14579">
    <property type="entry name" value="HHH_6"/>
    <property type="match status" value="1"/>
</dbReference>
<dbReference type="Pfam" id="PF02811">
    <property type="entry name" value="PHP"/>
    <property type="match status" value="1"/>
</dbReference>
<dbReference type="Pfam" id="PF01336">
    <property type="entry name" value="tRNA_anti-codon"/>
    <property type="match status" value="1"/>
</dbReference>
<dbReference type="SMART" id="SM00481">
    <property type="entry name" value="POLIIIAc"/>
    <property type="match status" value="1"/>
</dbReference>
<dbReference type="SUPFAM" id="SSF89550">
    <property type="entry name" value="PHP domain-like"/>
    <property type="match status" value="1"/>
</dbReference>
<feature type="chain" id="PRO_0000103370" description="Error-prone DNA polymerase">
    <location>
        <begin position="1"/>
        <end position="1077"/>
    </location>
</feature>
<keyword id="KW-0963">Cytoplasm</keyword>
<keyword id="KW-0227">DNA damage</keyword>
<keyword id="KW-0234">DNA repair</keyword>
<keyword id="KW-0235">DNA replication</keyword>
<keyword id="KW-0239">DNA-directed DNA polymerase</keyword>
<keyword id="KW-0548">Nucleotidyltransferase</keyword>
<keyword id="KW-0808">Transferase</keyword>
<comment type="function">
    <text evidence="1">DNA polymerase involved in damage-induced mutagenesis and translesion synthesis (TLS). It is not the major replicative DNA polymerase.</text>
</comment>
<comment type="catalytic activity">
    <reaction evidence="1">
        <text>DNA(n) + a 2'-deoxyribonucleoside 5'-triphosphate = DNA(n+1) + diphosphate</text>
        <dbReference type="Rhea" id="RHEA:22508"/>
        <dbReference type="Rhea" id="RHEA-COMP:17339"/>
        <dbReference type="Rhea" id="RHEA-COMP:17340"/>
        <dbReference type="ChEBI" id="CHEBI:33019"/>
        <dbReference type="ChEBI" id="CHEBI:61560"/>
        <dbReference type="ChEBI" id="CHEBI:173112"/>
        <dbReference type="EC" id="2.7.7.7"/>
    </reaction>
</comment>
<comment type="subcellular location">
    <subcellularLocation>
        <location evidence="1">Cytoplasm</location>
    </subcellularLocation>
</comment>
<comment type="similarity">
    <text evidence="1">Belongs to the DNA polymerase type-C family. DnaE2 subfamily.</text>
</comment>
<protein>
    <recommendedName>
        <fullName evidence="1">Error-prone DNA polymerase</fullName>
        <ecNumber evidence="1">2.7.7.7</ecNumber>
    </recommendedName>
</protein>
<evidence type="ECO:0000255" key="1">
    <source>
        <dbReference type="HAMAP-Rule" id="MF_01902"/>
    </source>
</evidence>
<organism>
    <name type="scientific">Brucella abortus biovar 1 (strain 9-941)</name>
    <dbReference type="NCBI Taxonomy" id="262698"/>
    <lineage>
        <taxon>Bacteria</taxon>
        <taxon>Pseudomonadati</taxon>
        <taxon>Pseudomonadota</taxon>
        <taxon>Alphaproteobacteria</taxon>
        <taxon>Hyphomicrobiales</taxon>
        <taxon>Brucellaceae</taxon>
        <taxon>Brucella/Ochrobactrum group</taxon>
        <taxon>Brucella</taxon>
    </lineage>
</organism>
<name>DNAE2_BRUAB</name>
<proteinExistence type="inferred from homology"/>
<accession>Q57FU7</accession>
<reference key="1">
    <citation type="journal article" date="2005" name="J. Bacteriol.">
        <title>Completion of the genome sequence of Brucella abortus and comparison to the highly similar genomes of Brucella melitensis and Brucella suis.</title>
        <authorList>
            <person name="Halling S.M."/>
            <person name="Peterson-Burch B.D."/>
            <person name="Bricker B.J."/>
            <person name="Zuerner R.L."/>
            <person name="Qing Z."/>
            <person name="Li L.-L."/>
            <person name="Kapur V."/>
            <person name="Alt D.P."/>
            <person name="Olsen S.C."/>
        </authorList>
    </citation>
    <scope>NUCLEOTIDE SEQUENCE [LARGE SCALE GENOMIC DNA]</scope>
    <source>
        <strain>9-941</strain>
    </source>
</reference>
<gene>
    <name evidence="1" type="primary">dnaE2</name>
    <name type="ordered locus">BruAb1_0069</name>
</gene>
<sequence>MVPYFEMAAASNFSFLCGASHPQELVERAHALDLSGIGIADRNTLAGVVRAHAQWKDIRKESGFRLFIGCRLSFIDGTPDMVVYPRDRAAYGQLCRLLTEGKHRAAIKGECHLEWADLLFRARQFQIAVFPPDEDEPDFAARLTEIAQAAPGSVWLALTMPHQGQDGRRAERIARFAAQAGVPLIATNDVLYHHPDRRPLQDVLTATRHHTTVFAAGRLLEKNAERHLKPPHEMVRLFRDYPEAIAATADFVAPITFQLDELKYAYPDEPIPPGKTAQQHLYDLVWEGAARHYGADMIPPKVQGLINKELALIARLEYEPYFLTVYDIVTHAREKGILCQGRGSAANSVVCFCLGITGVNPTQVDLLFERFISAERKEPPDIDVDFEHERREEVMQYVYDRYSRDRAAIVATVISYRSRSAIRDVGKALGLSEDVTAALANTVWGLSGGGIDRQHIRQAGLDPDNPIIQRAVELAITLIGFPRHLSQHVGGFVLTRDRLDETVPIGPAAMDKRSFIEWDKDDIDEVGLMKVDVLSLGMLTCIRKAFDLIHQHKPQLYGGEKLTLASLPRKDKAVYDMLCKGDSLGVFQVESRAQMNMLPRLRPQEFYDLVIEVAIVRPGPIQGDMVHPYLRRRSGQEPCTLPSPSPQHGPANELQQILGKTKGVPLFQEQAMRIAMEAAKFTPEEANQLRRAMATFRKMGTIHTMEKKMIDGMVNRGYDRTFAENCFNQIKGFGEYGFPESHAASFAHLVYISAWLKCHHPEVFAAALLNSQPMGFYAPAQIVRDAREHGVTVLPVDVNFSQWDNILEETPDVHLALRLGFRQIDGFSKRDTELLIADRQEPYRTIEDMHRRLRLDRRAFTLLADADAFGSLDIDRRAALWAVRRLPNDETLPLFRAAAASELAQEPRTKLPEMAASEHVIADYETTRLSLKGHPLQYLREGLAAEGVSTCRAVQEGADGRRMKVAGVVTVRQRPGSAKGVVFLTIEDETGIANIVIWPKIMKVFRREVMSARLIHIEGRIQRSLEGVVHLVAAKLQDRSAALIEMSGREAQRLIAPSQMAHHPRNVRVMPNSRDFH</sequence>